<keyword id="KW-0052">Apoplast</keyword>
<keyword id="KW-0325">Glycoprotein</keyword>
<keyword id="KW-0430">Lectin</keyword>
<keyword id="KW-0597">Phosphoprotein</keyword>
<keyword id="KW-1185">Reference proteome</keyword>
<keyword id="KW-0964">Secreted</keyword>
<keyword id="KW-0732">Signal</keyword>
<gene>
    <name type="ordered locus">At1g53070</name>
    <name type="ORF">F8L10.7</name>
</gene>
<organism>
    <name type="scientific">Arabidopsis thaliana</name>
    <name type="common">Mouse-ear cress</name>
    <dbReference type="NCBI Taxonomy" id="3702"/>
    <lineage>
        <taxon>Eukaryota</taxon>
        <taxon>Viridiplantae</taxon>
        <taxon>Streptophyta</taxon>
        <taxon>Embryophyta</taxon>
        <taxon>Tracheophyta</taxon>
        <taxon>Spermatophyta</taxon>
        <taxon>Magnoliopsida</taxon>
        <taxon>eudicotyledons</taxon>
        <taxon>Gunneridae</taxon>
        <taxon>Pentapetalae</taxon>
        <taxon>rosids</taxon>
        <taxon>malvids</taxon>
        <taxon>Brassicales</taxon>
        <taxon>Brassicaceae</taxon>
        <taxon>Camelineae</taxon>
        <taxon>Arabidopsis</taxon>
    </lineage>
</organism>
<feature type="signal peptide" evidence="3">
    <location>
        <begin position="1"/>
        <end position="23"/>
    </location>
</feature>
<feature type="chain" id="PRO_0000428919" description="Lectin-like protein At1g53070">
    <location>
        <begin position="24"/>
        <end position="272"/>
    </location>
</feature>
<feature type="region of interest" description="Legume-lectin like">
    <location>
        <begin position="24"/>
        <end position="271"/>
    </location>
</feature>
<feature type="modified residue" description="Phosphoserine" evidence="2">
    <location>
        <position position="241"/>
    </location>
</feature>
<feature type="glycosylation site" description="N-linked (GlcNAc...) asparagine" evidence="3">
    <location>
        <position position="33"/>
    </location>
</feature>
<feature type="glycosylation site" description="N-linked (GlcNAc...) asparagine" evidence="3">
    <location>
        <position position="84"/>
    </location>
</feature>
<feature type="glycosylation site" description="N-linked (GlcNAc...) asparagine" evidence="3">
    <location>
        <position position="134"/>
    </location>
</feature>
<feature type="sequence conflict" description="In Ref. 3; BAF01418." evidence="4" ref="3">
    <original>T</original>
    <variation>S</variation>
    <location>
        <position position="9"/>
    </location>
</feature>
<name>LECT3_ARATH</name>
<sequence length="272" mass="30378">MKIQILCFTTLFLAIFTSQVTTAYKFKFDYFGNGTDPISFHGDAEYGPDTDGKSRSGAIALTRDNIPFSHGRAIFTTPITFKPNASALYPFKTSFTFSITPKTNPNQGHGLAFIVVPSNQNDAGSGLGYLSLLNRTNNGNPNNHLFAVEFDVFQDKSLGDMNDNHVGIDINSVDSVVSVKSGYWVMTRSGWLFKDLKLSSGDRYKAWIEYNNNYKVVSVTIGLAHLKKPNRPLIEAKFDLSKVIHEVMYTGFAGSMGRGVERHEIWDWTFQN</sequence>
<protein>
    <recommendedName>
        <fullName>Lectin-like protein At1g53070</fullName>
    </recommendedName>
</protein>
<dbReference type="EMBL" id="AC022520">
    <property type="protein sequence ID" value="AAF87861.1"/>
    <property type="molecule type" value="Genomic_DNA"/>
</dbReference>
<dbReference type="EMBL" id="CP002684">
    <property type="protein sequence ID" value="AEE32886.1"/>
    <property type="molecule type" value="Genomic_DNA"/>
</dbReference>
<dbReference type="EMBL" id="AK229567">
    <property type="protein sequence ID" value="BAF01418.1"/>
    <property type="molecule type" value="mRNA"/>
</dbReference>
<dbReference type="PIR" id="C96571">
    <property type="entry name" value="C96571"/>
</dbReference>
<dbReference type="RefSeq" id="NP_175715.1">
    <property type="nucleotide sequence ID" value="NM_104186.4"/>
</dbReference>
<dbReference type="SMR" id="Q9LNN2"/>
<dbReference type="BioGRID" id="26966">
    <property type="interactions" value="2"/>
</dbReference>
<dbReference type="FunCoup" id="Q9LNN2">
    <property type="interactions" value="1"/>
</dbReference>
<dbReference type="STRING" id="3702.Q9LNN2"/>
<dbReference type="GlyGen" id="Q9LNN2">
    <property type="glycosylation" value="3 sites"/>
</dbReference>
<dbReference type="iPTMnet" id="Q9LNN2"/>
<dbReference type="MetOSite" id="Q9LNN2"/>
<dbReference type="PaxDb" id="3702-AT1G53070.1"/>
<dbReference type="ProteomicsDB" id="238197"/>
<dbReference type="EnsemblPlants" id="AT1G53070.1">
    <property type="protein sequence ID" value="AT1G53070.1"/>
    <property type="gene ID" value="AT1G53070"/>
</dbReference>
<dbReference type="GeneID" id="841741"/>
<dbReference type="Gramene" id="AT1G53070.1">
    <property type="protein sequence ID" value="AT1G53070.1"/>
    <property type="gene ID" value="AT1G53070"/>
</dbReference>
<dbReference type="KEGG" id="ath:AT1G53070"/>
<dbReference type="Araport" id="AT1G53070"/>
<dbReference type="TAIR" id="AT1G53070"/>
<dbReference type="eggNOG" id="ENOG502QRZ3">
    <property type="taxonomic scope" value="Eukaryota"/>
</dbReference>
<dbReference type="HOGENOM" id="CLU_000288_62_2_1"/>
<dbReference type="InParanoid" id="Q9LNN2"/>
<dbReference type="OMA" id="GDRYKAW"/>
<dbReference type="OrthoDB" id="543442at2759"/>
<dbReference type="PhylomeDB" id="Q9LNN2"/>
<dbReference type="PRO" id="PR:Q9LNN2"/>
<dbReference type="Proteomes" id="UP000006548">
    <property type="component" value="Chromosome 1"/>
</dbReference>
<dbReference type="ExpressionAtlas" id="Q9LNN2">
    <property type="expression patterns" value="baseline and differential"/>
</dbReference>
<dbReference type="GO" id="GO:0048046">
    <property type="term" value="C:apoplast"/>
    <property type="evidence" value="ECO:0007669"/>
    <property type="project" value="UniProtKB-SubCell"/>
</dbReference>
<dbReference type="GO" id="GO:0030246">
    <property type="term" value="F:carbohydrate binding"/>
    <property type="evidence" value="ECO:0007669"/>
    <property type="project" value="UniProtKB-KW"/>
</dbReference>
<dbReference type="CDD" id="cd06899">
    <property type="entry name" value="lectin_legume_LecRK_Arcelin_ConA"/>
    <property type="match status" value="1"/>
</dbReference>
<dbReference type="Gene3D" id="2.60.120.200">
    <property type="match status" value="1"/>
</dbReference>
<dbReference type="InterPro" id="IPR013320">
    <property type="entry name" value="ConA-like_dom_sf"/>
</dbReference>
<dbReference type="InterPro" id="IPR016363">
    <property type="entry name" value="L-lectin"/>
</dbReference>
<dbReference type="InterPro" id="IPR001220">
    <property type="entry name" value="Legume_lectin_dom"/>
</dbReference>
<dbReference type="InterPro" id="IPR050258">
    <property type="entry name" value="Leguminous_Lectin"/>
</dbReference>
<dbReference type="PANTHER" id="PTHR32401:SF33">
    <property type="entry name" value="(RAPE) HYPOTHETICAL PROTEIN"/>
    <property type="match status" value="1"/>
</dbReference>
<dbReference type="PANTHER" id="PTHR32401">
    <property type="entry name" value="CONCANAVALIN A-LIKE LECTIN FAMILY PROTEIN"/>
    <property type="match status" value="1"/>
</dbReference>
<dbReference type="Pfam" id="PF00139">
    <property type="entry name" value="Lectin_legB"/>
    <property type="match status" value="1"/>
</dbReference>
<dbReference type="PIRSF" id="PIRSF002690">
    <property type="entry name" value="L-type_lectin_plant"/>
    <property type="match status" value="1"/>
</dbReference>
<dbReference type="SUPFAM" id="SSF49899">
    <property type="entry name" value="Concanavalin A-like lectins/glucanases"/>
    <property type="match status" value="1"/>
</dbReference>
<evidence type="ECO:0000250" key="1"/>
<evidence type="ECO:0000250" key="2">
    <source>
        <dbReference type="UniProtKB" id="Q9LZF5"/>
    </source>
</evidence>
<evidence type="ECO:0000255" key="3"/>
<evidence type="ECO:0000305" key="4"/>
<comment type="subcellular location">
    <subcellularLocation>
        <location evidence="1">Secreted</location>
        <location evidence="1">Extracellular space</location>
        <location evidence="1">Apoplast</location>
    </subcellularLocation>
</comment>
<comment type="similarity">
    <text evidence="4">Belongs to the leguminous lectin family.</text>
</comment>
<accession>Q9LNN2</accession>
<accession>Q0WN82</accession>
<proteinExistence type="evidence at transcript level"/>
<reference key="1">
    <citation type="journal article" date="2000" name="Nature">
        <title>Sequence and analysis of chromosome 1 of the plant Arabidopsis thaliana.</title>
        <authorList>
            <person name="Theologis A."/>
            <person name="Ecker J.R."/>
            <person name="Palm C.J."/>
            <person name="Federspiel N.A."/>
            <person name="Kaul S."/>
            <person name="White O."/>
            <person name="Alonso J."/>
            <person name="Altafi H."/>
            <person name="Araujo R."/>
            <person name="Bowman C.L."/>
            <person name="Brooks S.Y."/>
            <person name="Buehler E."/>
            <person name="Chan A."/>
            <person name="Chao Q."/>
            <person name="Chen H."/>
            <person name="Cheuk R.F."/>
            <person name="Chin C.W."/>
            <person name="Chung M.K."/>
            <person name="Conn L."/>
            <person name="Conway A.B."/>
            <person name="Conway A.R."/>
            <person name="Creasy T.H."/>
            <person name="Dewar K."/>
            <person name="Dunn P."/>
            <person name="Etgu P."/>
            <person name="Feldblyum T.V."/>
            <person name="Feng J.-D."/>
            <person name="Fong B."/>
            <person name="Fujii C.Y."/>
            <person name="Gill J.E."/>
            <person name="Goldsmith A.D."/>
            <person name="Haas B."/>
            <person name="Hansen N.F."/>
            <person name="Hughes B."/>
            <person name="Huizar L."/>
            <person name="Hunter J.L."/>
            <person name="Jenkins J."/>
            <person name="Johnson-Hopson C."/>
            <person name="Khan S."/>
            <person name="Khaykin E."/>
            <person name="Kim C.J."/>
            <person name="Koo H.L."/>
            <person name="Kremenetskaia I."/>
            <person name="Kurtz D.B."/>
            <person name="Kwan A."/>
            <person name="Lam B."/>
            <person name="Langin-Hooper S."/>
            <person name="Lee A."/>
            <person name="Lee J.M."/>
            <person name="Lenz C.A."/>
            <person name="Li J.H."/>
            <person name="Li Y.-P."/>
            <person name="Lin X."/>
            <person name="Liu S.X."/>
            <person name="Liu Z.A."/>
            <person name="Luros J.S."/>
            <person name="Maiti R."/>
            <person name="Marziali A."/>
            <person name="Militscher J."/>
            <person name="Miranda M."/>
            <person name="Nguyen M."/>
            <person name="Nierman W.C."/>
            <person name="Osborne B.I."/>
            <person name="Pai G."/>
            <person name="Peterson J."/>
            <person name="Pham P.K."/>
            <person name="Rizzo M."/>
            <person name="Rooney T."/>
            <person name="Rowley D."/>
            <person name="Sakano H."/>
            <person name="Salzberg S.L."/>
            <person name="Schwartz J.R."/>
            <person name="Shinn P."/>
            <person name="Southwick A.M."/>
            <person name="Sun H."/>
            <person name="Tallon L.J."/>
            <person name="Tambunga G."/>
            <person name="Toriumi M.J."/>
            <person name="Town C.D."/>
            <person name="Utterback T."/>
            <person name="Van Aken S."/>
            <person name="Vaysberg M."/>
            <person name="Vysotskaia V.S."/>
            <person name="Walker M."/>
            <person name="Wu D."/>
            <person name="Yu G."/>
            <person name="Fraser C.M."/>
            <person name="Venter J.C."/>
            <person name="Davis R.W."/>
        </authorList>
    </citation>
    <scope>NUCLEOTIDE SEQUENCE [LARGE SCALE GENOMIC DNA]</scope>
    <source>
        <strain>cv. Columbia</strain>
    </source>
</reference>
<reference key="2">
    <citation type="journal article" date="2017" name="Plant J.">
        <title>Araport11: a complete reannotation of the Arabidopsis thaliana reference genome.</title>
        <authorList>
            <person name="Cheng C.Y."/>
            <person name="Krishnakumar V."/>
            <person name="Chan A.P."/>
            <person name="Thibaud-Nissen F."/>
            <person name="Schobel S."/>
            <person name="Town C.D."/>
        </authorList>
    </citation>
    <scope>GENOME REANNOTATION</scope>
    <source>
        <strain>cv. Columbia</strain>
    </source>
</reference>
<reference key="3">
    <citation type="submission" date="2006-07" db="EMBL/GenBank/DDBJ databases">
        <title>Large-scale analysis of RIKEN Arabidopsis full-length (RAFL) cDNAs.</title>
        <authorList>
            <person name="Totoki Y."/>
            <person name="Seki M."/>
            <person name="Ishida J."/>
            <person name="Nakajima M."/>
            <person name="Enju A."/>
            <person name="Kamiya A."/>
            <person name="Narusaka M."/>
            <person name="Shin-i T."/>
            <person name="Nakagawa M."/>
            <person name="Sakamoto N."/>
            <person name="Oishi K."/>
            <person name="Kohara Y."/>
            <person name="Kobayashi M."/>
            <person name="Toyoda A."/>
            <person name="Sakaki Y."/>
            <person name="Sakurai T."/>
            <person name="Iida K."/>
            <person name="Akiyama K."/>
            <person name="Satou M."/>
            <person name="Toyoda T."/>
            <person name="Konagaya A."/>
            <person name="Carninci P."/>
            <person name="Kawai J."/>
            <person name="Hayashizaki Y."/>
            <person name="Shinozaki K."/>
        </authorList>
    </citation>
    <scope>NUCLEOTIDE SEQUENCE [LARGE SCALE MRNA]</scope>
    <source>
        <strain>cv. Columbia</strain>
    </source>
</reference>